<organism>
    <name type="scientific">Mycoplasma genitalium (strain ATCC 33530 / DSM 19775 / NCTC 10195 / G37)</name>
    <name type="common">Mycoplasmoides genitalium</name>
    <dbReference type="NCBI Taxonomy" id="243273"/>
    <lineage>
        <taxon>Bacteria</taxon>
        <taxon>Bacillati</taxon>
        <taxon>Mycoplasmatota</taxon>
        <taxon>Mycoplasmoidales</taxon>
        <taxon>Mycoplasmoidaceae</taxon>
        <taxon>Mycoplasmoides</taxon>
    </lineage>
</organism>
<reference key="1">
    <citation type="journal article" date="1995" name="Science">
        <title>The minimal gene complement of Mycoplasma genitalium.</title>
        <authorList>
            <person name="Fraser C.M."/>
            <person name="Gocayne J.D."/>
            <person name="White O."/>
            <person name="Adams M.D."/>
            <person name="Clayton R.A."/>
            <person name="Fleischmann R.D."/>
            <person name="Bult C.J."/>
            <person name="Kerlavage A.R."/>
            <person name="Sutton G.G."/>
            <person name="Kelley J.M."/>
            <person name="Fritchman J.L."/>
            <person name="Weidman J.F."/>
            <person name="Small K.V."/>
            <person name="Sandusky M."/>
            <person name="Fuhrmann J.L."/>
            <person name="Nguyen D.T."/>
            <person name="Utterback T.R."/>
            <person name="Saudek D.M."/>
            <person name="Phillips C.A."/>
            <person name="Merrick J.M."/>
            <person name="Tomb J.-F."/>
            <person name="Dougherty B.A."/>
            <person name="Bott K.F."/>
            <person name="Hu P.-C."/>
            <person name="Lucier T.S."/>
            <person name="Peterson S.N."/>
            <person name="Smith H.O."/>
            <person name="Hutchison C.A. III"/>
            <person name="Venter J.C."/>
        </authorList>
    </citation>
    <scope>NUCLEOTIDE SEQUENCE [LARGE SCALE GENOMIC DNA]</scope>
    <source>
        <strain>ATCC 33530 / DSM 19775 / NCTC 10195 / G37</strain>
    </source>
</reference>
<feature type="chain" id="PRO_0000108658" description="Ribosomal RNA small subunit methyltransferase H">
    <location>
        <begin position="1"/>
        <end position="309"/>
    </location>
</feature>
<feature type="binding site" evidence="1">
    <location>
        <begin position="36"/>
        <end position="38"/>
    </location>
    <ligand>
        <name>S-adenosyl-L-methionine</name>
        <dbReference type="ChEBI" id="CHEBI:59789"/>
    </ligand>
</feature>
<feature type="binding site" evidence="1">
    <location>
        <position position="55"/>
    </location>
    <ligand>
        <name>S-adenosyl-L-methionine</name>
        <dbReference type="ChEBI" id="CHEBI:59789"/>
    </ligand>
</feature>
<feature type="binding site" evidence="1">
    <location>
        <position position="81"/>
    </location>
    <ligand>
        <name>S-adenosyl-L-methionine</name>
        <dbReference type="ChEBI" id="CHEBI:59789"/>
    </ligand>
</feature>
<feature type="binding site" evidence="1">
    <location>
        <position position="102"/>
    </location>
    <ligand>
        <name>S-adenosyl-L-methionine</name>
        <dbReference type="ChEBI" id="CHEBI:59789"/>
    </ligand>
</feature>
<feature type="binding site" evidence="1">
    <location>
        <position position="109"/>
    </location>
    <ligand>
        <name>S-adenosyl-L-methionine</name>
        <dbReference type="ChEBI" id="CHEBI:59789"/>
    </ligand>
</feature>
<dbReference type="EC" id="2.1.1.199" evidence="1"/>
<dbReference type="EMBL" id="L43967">
    <property type="protein sequence ID" value="AAC71443.1"/>
    <property type="molecule type" value="Genomic_DNA"/>
</dbReference>
<dbReference type="PIR" id="E64224">
    <property type="entry name" value="E64224"/>
</dbReference>
<dbReference type="RefSeq" id="WP_009885760.1">
    <property type="nucleotide sequence ID" value="NC_000908.2"/>
</dbReference>
<dbReference type="SMR" id="P47464"/>
<dbReference type="FunCoup" id="P47464">
    <property type="interactions" value="188"/>
</dbReference>
<dbReference type="STRING" id="243273.MG_222"/>
<dbReference type="GeneID" id="88282367"/>
<dbReference type="KEGG" id="mge:MG_222"/>
<dbReference type="eggNOG" id="COG0275">
    <property type="taxonomic scope" value="Bacteria"/>
</dbReference>
<dbReference type="HOGENOM" id="CLU_038422_2_0_14"/>
<dbReference type="InParanoid" id="P47464"/>
<dbReference type="OrthoDB" id="9806637at2"/>
<dbReference type="BioCyc" id="MGEN243273:G1GJ2-268-MONOMER"/>
<dbReference type="Proteomes" id="UP000000807">
    <property type="component" value="Chromosome"/>
</dbReference>
<dbReference type="GO" id="GO:0005737">
    <property type="term" value="C:cytoplasm"/>
    <property type="evidence" value="ECO:0000318"/>
    <property type="project" value="GO_Central"/>
</dbReference>
<dbReference type="GO" id="GO:0071424">
    <property type="term" value="F:rRNA (cytosine-N4-)-methyltransferase activity"/>
    <property type="evidence" value="ECO:0000318"/>
    <property type="project" value="GO_Central"/>
</dbReference>
<dbReference type="GO" id="GO:0070475">
    <property type="term" value="P:rRNA base methylation"/>
    <property type="evidence" value="ECO:0000318"/>
    <property type="project" value="GO_Central"/>
</dbReference>
<dbReference type="Gene3D" id="1.10.150.170">
    <property type="entry name" value="Putative methyltransferase TM0872, insert domain"/>
    <property type="match status" value="1"/>
</dbReference>
<dbReference type="Gene3D" id="3.40.50.150">
    <property type="entry name" value="Vaccinia Virus protein VP39"/>
    <property type="match status" value="1"/>
</dbReference>
<dbReference type="HAMAP" id="MF_01007">
    <property type="entry name" value="16SrRNA_methyltr_H"/>
    <property type="match status" value="1"/>
</dbReference>
<dbReference type="InterPro" id="IPR002903">
    <property type="entry name" value="RsmH"/>
</dbReference>
<dbReference type="InterPro" id="IPR023397">
    <property type="entry name" value="SAM-dep_MeTrfase_MraW_recog"/>
</dbReference>
<dbReference type="InterPro" id="IPR029063">
    <property type="entry name" value="SAM-dependent_MTases_sf"/>
</dbReference>
<dbReference type="NCBIfam" id="TIGR00006">
    <property type="entry name" value="16S rRNA (cytosine(1402)-N(4))-methyltransferase RsmH"/>
    <property type="match status" value="1"/>
</dbReference>
<dbReference type="PANTHER" id="PTHR11265:SF0">
    <property type="entry name" value="12S RRNA N4-METHYLCYTIDINE METHYLTRANSFERASE"/>
    <property type="match status" value="1"/>
</dbReference>
<dbReference type="PANTHER" id="PTHR11265">
    <property type="entry name" value="S-ADENOSYL-METHYLTRANSFERASE MRAW"/>
    <property type="match status" value="1"/>
</dbReference>
<dbReference type="Pfam" id="PF01795">
    <property type="entry name" value="Methyltransf_5"/>
    <property type="match status" value="1"/>
</dbReference>
<dbReference type="PIRSF" id="PIRSF004486">
    <property type="entry name" value="MraW"/>
    <property type="match status" value="1"/>
</dbReference>
<dbReference type="SUPFAM" id="SSF81799">
    <property type="entry name" value="Putative methyltransferase TM0872, insert domain"/>
    <property type="match status" value="1"/>
</dbReference>
<dbReference type="SUPFAM" id="SSF53335">
    <property type="entry name" value="S-adenosyl-L-methionine-dependent methyltransferases"/>
    <property type="match status" value="1"/>
</dbReference>
<sequence length="309" mass="35123">MLNNQQIHQSVLINEVIHNLNINPCGNYLDLTAGFAGHSQKILEKLTTGTLTINDVDKESINFCQKLFFKNNNVVIIHDNFANFPVHLKQLSITKFDGILMDLGVSSHQLNQPNRGFSFKNDGPIDMRMDQSNQKNTALTVLKNLTEQKLSLILKKYGDIKHPKPIAIGLKKAVQTEKNLTTTQLAKVVKECATGFEKYQSRNYLAKVFQAIRIYLNDEITNLKTALTFIPNLLKNNSRFLVIVFHSIEEKIVRNFIAKLTSFIQPEALPIKLTPAYQLITKKPILPSQKELELNPRSRSAKLFVIQKN</sequence>
<name>RSMH_MYCGE</name>
<gene>
    <name evidence="1" type="primary">rsmH</name>
    <name type="synonym">mraW</name>
    <name type="ordered locus">MG222</name>
</gene>
<keyword id="KW-0963">Cytoplasm</keyword>
<keyword id="KW-0489">Methyltransferase</keyword>
<keyword id="KW-1185">Reference proteome</keyword>
<keyword id="KW-0698">rRNA processing</keyword>
<keyword id="KW-0949">S-adenosyl-L-methionine</keyword>
<keyword id="KW-0808">Transferase</keyword>
<comment type="function">
    <text evidence="1">Specifically methylates the N4 position of cytidine in position 1402 (C1402) of 16S rRNA.</text>
</comment>
<comment type="catalytic activity">
    <reaction evidence="1">
        <text>cytidine(1402) in 16S rRNA + S-adenosyl-L-methionine = N(4)-methylcytidine(1402) in 16S rRNA + S-adenosyl-L-homocysteine + H(+)</text>
        <dbReference type="Rhea" id="RHEA:42928"/>
        <dbReference type="Rhea" id="RHEA-COMP:10286"/>
        <dbReference type="Rhea" id="RHEA-COMP:10287"/>
        <dbReference type="ChEBI" id="CHEBI:15378"/>
        <dbReference type="ChEBI" id="CHEBI:57856"/>
        <dbReference type="ChEBI" id="CHEBI:59789"/>
        <dbReference type="ChEBI" id="CHEBI:74506"/>
        <dbReference type="ChEBI" id="CHEBI:82748"/>
        <dbReference type="EC" id="2.1.1.199"/>
    </reaction>
</comment>
<comment type="subcellular location">
    <subcellularLocation>
        <location evidence="1">Cytoplasm</location>
    </subcellularLocation>
</comment>
<comment type="similarity">
    <text evidence="1">Belongs to the methyltransferase superfamily. RsmH family.</text>
</comment>
<proteinExistence type="inferred from homology"/>
<evidence type="ECO:0000255" key="1">
    <source>
        <dbReference type="HAMAP-Rule" id="MF_01007"/>
    </source>
</evidence>
<protein>
    <recommendedName>
        <fullName evidence="1">Ribosomal RNA small subunit methyltransferase H</fullName>
        <ecNumber evidence="1">2.1.1.199</ecNumber>
    </recommendedName>
    <alternativeName>
        <fullName evidence="1">16S rRNA m(4)C1402 methyltransferase</fullName>
    </alternativeName>
    <alternativeName>
        <fullName evidence="1">rRNA (cytosine-N(4)-)-methyltransferase RsmH</fullName>
    </alternativeName>
</protein>
<accession>P47464</accession>